<sequence length="209" mass="22952">MYNKVLIIDDHPVLRFAVRVLMEKEGFEVIGETDNGIDGLKIAREKIPNLVVLDIGIPKLDGLEVIARLQSLGLPLRVLVLTGQPPSLFARRCLNSGAAGFVCKHENLHEVINAAKAVMAGYTYFPSTTLSEMRMGDNAKSDSTLISVLSNRELTVLQLLAQGMSNKDIADSMFLSNKTVSTYKTRLLQKLNATSLVELIDLAKRNNLA</sequence>
<accession>P0A4H3</accession>
<accession>P16574</accession>
<protein>
    <recommendedName>
        <fullName>Virulence factors putative positive transcription regulator BvgA</fullName>
    </recommendedName>
</protein>
<reference key="1">
    <citation type="journal article" date="1991" name="Mol. Microbiol.">
        <title>Structural and genetic analysis of the bvg locus in Bordetella species.</title>
        <authorList>
            <person name="Arico B."/>
            <person name="Scarlato V."/>
            <person name="Monack D.M."/>
            <person name="Falkow S."/>
            <person name="Rappuoli R."/>
        </authorList>
    </citation>
    <scope>NUCLEOTIDE SEQUENCE [GENOMIC DNA]</scope>
    <source>
        <strain>7865</strain>
    </source>
</reference>
<reference key="2">
    <citation type="journal article" date="2003" name="Nat. Genet.">
        <title>Comparative analysis of the genome sequences of Bordetella pertussis, Bordetella parapertussis and Bordetella bronchiseptica.</title>
        <authorList>
            <person name="Parkhill J."/>
            <person name="Sebaihia M."/>
            <person name="Preston A."/>
            <person name="Murphy L.D."/>
            <person name="Thomson N.R."/>
            <person name="Harris D.E."/>
            <person name="Holden M.T.G."/>
            <person name="Churcher C.M."/>
            <person name="Bentley S.D."/>
            <person name="Mungall K.L."/>
            <person name="Cerdeno-Tarraga A.-M."/>
            <person name="Temple L."/>
            <person name="James K.D."/>
            <person name="Harris B."/>
            <person name="Quail M.A."/>
            <person name="Achtman M."/>
            <person name="Atkin R."/>
            <person name="Baker S."/>
            <person name="Basham D."/>
            <person name="Bason N."/>
            <person name="Cherevach I."/>
            <person name="Chillingworth T."/>
            <person name="Collins M."/>
            <person name="Cronin A."/>
            <person name="Davis P."/>
            <person name="Doggett J."/>
            <person name="Feltwell T."/>
            <person name="Goble A."/>
            <person name="Hamlin N."/>
            <person name="Hauser H."/>
            <person name="Holroyd S."/>
            <person name="Jagels K."/>
            <person name="Leather S."/>
            <person name="Moule S."/>
            <person name="Norberczak H."/>
            <person name="O'Neil S."/>
            <person name="Ormond D."/>
            <person name="Price C."/>
            <person name="Rabbinowitsch E."/>
            <person name="Rutter S."/>
            <person name="Sanders M."/>
            <person name="Saunders D."/>
            <person name="Seeger K."/>
            <person name="Sharp S."/>
            <person name="Simmonds M."/>
            <person name="Skelton J."/>
            <person name="Squares R."/>
            <person name="Squares S."/>
            <person name="Stevens K."/>
            <person name="Unwin L."/>
            <person name="Whitehead S."/>
            <person name="Barrell B.G."/>
            <person name="Maskell D.J."/>
        </authorList>
    </citation>
    <scope>NUCLEOTIDE SEQUENCE [LARGE SCALE GENOMIC DNA]</scope>
    <source>
        <strain>ATCC BAA-588 / NCTC 13252 / RB50</strain>
    </source>
</reference>
<evidence type="ECO:0000250" key="1"/>
<evidence type="ECO:0000255" key="2">
    <source>
        <dbReference type="PROSITE-ProRule" id="PRU00169"/>
    </source>
</evidence>
<evidence type="ECO:0000255" key="3">
    <source>
        <dbReference type="PROSITE-ProRule" id="PRU00411"/>
    </source>
</evidence>
<evidence type="ECO:0000305" key="4"/>
<comment type="function">
    <text>Member of the two-component regulatory system BvgS/BvgA. Activates the transcription of virulence genes.</text>
</comment>
<comment type="subunit">
    <text evidence="1">Homodimer.</text>
</comment>
<comment type="PTM">
    <text evidence="1">Phosphorylated by BvgS.</text>
</comment>
<comment type="sequence caution" evidence="4">
    <conflict type="erroneous initiation">
        <sequence resource="EMBL-CDS" id="CAE33486"/>
    </conflict>
</comment>
<organism>
    <name type="scientific">Bordetella bronchiseptica (strain ATCC BAA-588 / NCTC 13252 / RB50)</name>
    <name type="common">Alcaligenes bronchisepticus</name>
    <dbReference type="NCBI Taxonomy" id="257310"/>
    <lineage>
        <taxon>Bacteria</taxon>
        <taxon>Pseudomonadati</taxon>
        <taxon>Pseudomonadota</taxon>
        <taxon>Betaproteobacteria</taxon>
        <taxon>Burkholderiales</taxon>
        <taxon>Alcaligenaceae</taxon>
        <taxon>Bordetella</taxon>
    </lineage>
</organism>
<gene>
    <name type="primary">bvgA</name>
    <name type="ordered locus">BB2994</name>
</gene>
<keyword id="KW-0010">Activator</keyword>
<keyword id="KW-0238">DNA-binding</keyword>
<keyword id="KW-0597">Phosphoprotein</keyword>
<keyword id="KW-0804">Transcription</keyword>
<keyword id="KW-0805">Transcription regulation</keyword>
<keyword id="KW-0902">Two-component regulatory system</keyword>
<keyword id="KW-0843">Virulence</keyword>
<feature type="chain" id="PRO_0000081032" description="Virulence factors putative positive transcription regulator BvgA">
    <location>
        <begin position="1"/>
        <end position="209"/>
    </location>
</feature>
<feature type="domain" description="Response regulatory" evidence="2">
    <location>
        <begin position="4"/>
        <end position="119"/>
    </location>
</feature>
<feature type="domain" description="HTH luxR-type" evidence="3">
    <location>
        <begin position="142"/>
        <end position="207"/>
    </location>
</feature>
<feature type="DNA-binding region" description="H-T-H motif" evidence="3">
    <location>
        <begin position="166"/>
        <end position="185"/>
    </location>
</feature>
<feature type="modified residue" description="4-aspartylphosphate" evidence="2">
    <location>
        <position position="54"/>
    </location>
</feature>
<proteinExistence type="inferred from homology"/>
<name>BVGA_BORBR</name>
<dbReference type="EMBL" id="X58355">
    <property type="protein sequence ID" value="CAA41251.1"/>
    <property type="molecule type" value="Genomic_DNA"/>
</dbReference>
<dbReference type="EMBL" id="BX640446">
    <property type="protein sequence ID" value="CAE33486.1"/>
    <property type="status" value="ALT_INIT"/>
    <property type="molecule type" value="Genomic_DNA"/>
</dbReference>
<dbReference type="PIR" id="S17943">
    <property type="entry name" value="S17943"/>
</dbReference>
<dbReference type="RefSeq" id="WP_010930609.1">
    <property type="nucleotide sequence ID" value="NC_002927.3"/>
</dbReference>
<dbReference type="SMR" id="P0A4H3"/>
<dbReference type="GeneID" id="93204813"/>
<dbReference type="KEGG" id="bbr:BB2994"/>
<dbReference type="eggNOG" id="COG2197">
    <property type="taxonomic scope" value="Bacteria"/>
</dbReference>
<dbReference type="HOGENOM" id="CLU_000445_90_1_4"/>
<dbReference type="Proteomes" id="UP000001027">
    <property type="component" value="Chromosome"/>
</dbReference>
<dbReference type="GO" id="GO:0003677">
    <property type="term" value="F:DNA binding"/>
    <property type="evidence" value="ECO:0007669"/>
    <property type="project" value="UniProtKB-KW"/>
</dbReference>
<dbReference type="GO" id="GO:0000160">
    <property type="term" value="P:phosphorelay signal transduction system"/>
    <property type="evidence" value="ECO:0007669"/>
    <property type="project" value="UniProtKB-KW"/>
</dbReference>
<dbReference type="GO" id="GO:0006355">
    <property type="term" value="P:regulation of DNA-templated transcription"/>
    <property type="evidence" value="ECO:0007669"/>
    <property type="project" value="InterPro"/>
</dbReference>
<dbReference type="CDD" id="cd06170">
    <property type="entry name" value="LuxR_C_like"/>
    <property type="match status" value="1"/>
</dbReference>
<dbReference type="CDD" id="cd17535">
    <property type="entry name" value="REC_NarL-like"/>
    <property type="match status" value="1"/>
</dbReference>
<dbReference type="Gene3D" id="3.40.50.2300">
    <property type="match status" value="1"/>
</dbReference>
<dbReference type="InterPro" id="IPR011006">
    <property type="entry name" value="CheY-like_superfamily"/>
</dbReference>
<dbReference type="InterPro" id="IPR001789">
    <property type="entry name" value="Sig_transdc_resp-reg_receiver"/>
</dbReference>
<dbReference type="InterPro" id="IPR000792">
    <property type="entry name" value="Tscrpt_reg_LuxR_C"/>
</dbReference>
<dbReference type="InterPro" id="IPR039420">
    <property type="entry name" value="WalR-like"/>
</dbReference>
<dbReference type="PANTHER" id="PTHR43214:SF41">
    <property type="entry name" value="NITRATE_NITRITE RESPONSE REGULATOR PROTEIN NARP"/>
    <property type="match status" value="1"/>
</dbReference>
<dbReference type="PANTHER" id="PTHR43214">
    <property type="entry name" value="TWO-COMPONENT RESPONSE REGULATOR"/>
    <property type="match status" value="1"/>
</dbReference>
<dbReference type="Pfam" id="PF00196">
    <property type="entry name" value="GerE"/>
    <property type="match status" value="1"/>
</dbReference>
<dbReference type="Pfam" id="PF00072">
    <property type="entry name" value="Response_reg"/>
    <property type="match status" value="1"/>
</dbReference>
<dbReference type="PRINTS" id="PR00038">
    <property type="entry name" value="HTHLUXR"/>
</dbReference>
<dbReference type="SMART" id="SM00421">
    <property type="entry name" value="HTH_LUXR"/>
    <property type="match status" value="1"/>
</dbReference>
<dbReference type="SMART" id="SM00448">
    <property type="entry name" value="REC"/>
    <property type="match status" value="1"/>
</dbReference>
<dbReference type="SUPFAM" id="SSF52172">
    <property type="entry name" value="CheY-like"/>
    <property type="match status" value="1"/>
</dbReference>
<dbReference type="PROSITE" id="PS00622">
    <property type="entry name" value="HTH_LUXR_1"/>
    <property type="match status" value="1"/>
</dbReference>
<dbReference type="PROSITE" id="PS50043">
    <property type="entry name" value="HTH_LUXR_2"/>
    <property type="match status" value="1"/>
</dbReference>
<dbReference type="PROSITE" id="PS50110">
    <property type="entry name" value="RESPONSE_REGULATORY"/>
    <property type="match status" value="1"/>
</dbReference>